<proteinExistence type="inferred from homology"/>
<feature type="chain" id="PRO_0000098494" description="Isoleucine--tRNA ligase">
    <location>
        <begin position="1"/>
        <end position="919"/>
    </location>
</feature>
<feature type="short sequence motif" description="'HIGH' region">
    <location>
        <begin position="57"/>
        <end position="67"/>
    </location>
</feature>
<feature type="short sequence motif" description="'KMSKS' region">
    <location>
        <begin position="594"/>
        <end position="598"/>
    </location>
</feature>
<feature type="binding site" evidence="1">
    <location>
        <position position="553"/>
    </location>
    <ligand>
        <name>L-isoleucyl-5'-AMP</name>
        <dbReference type="ChEBI" id="CHEBI:178002"/>
    </ligand>
</feature>
<feature type="binding site" evidence="1">
    <location>
        <position position="597"/>
    </location>
    <ligand>
        <name>ATP</name>
        <dbReference type="ChEBI" id="CHEBI:30616"/>
    </ligand>
</feature>
<feature type="binding site" evidence="1">
    <location>
        <position position="887"/>
    </location>
    <ligand>
        <name>Zn(2+)</name>
        <dbReference type="ChEBI" id="CHEBI:29105"/>
    </ligand>
</feature>
<feature type="binding site" evidence="1">
    <location>
        <position position="890"/>
    </location>
    <ligand>
        <name>Zn(2+)</name>
        <dbReference type="ChEBI" id="CHEBI:29105"/>
    </ligand>
</feature>
<feature type="binding site" evidence="1">
    <location>
        <position position="907"/>
    </location>
    <ligand>
        <name>Zn(2+)</name>
        <dbReference type="ChEBI" id="CHEBI:29105"/>
    </ligand>
</feature>
<feature type="binding site" evidence="1">
    <location>
        <position position="910"/>
    </location>
    <ligand>
        <name>Zn(2+)</name>
        <dbReference type="ChEBI" id="CHEBI:29105"/>
    </ligand>
</feature>
<protein>
    <recommendedName>
        <fullName evidence="1">Isoleucine--tRNA ligase</fullName>
        <ecNumber evidence="1">6.1.1.5</ecNumber>
    </recommendedName>
    <alternativeName>
        <fullName evidence="1">Isoleucyl-tRNA synthetase</fullName>
        <shortName evidence="1">IleRS</shortName>
    </alternativeName>
</protein>
<comment type="function">
    <text evidence="1">Catalyzes the attachment of isoleucine to tRNA(Ile). As IleRS can inadvertently accommodate and process structurally similar amino acids such as valine, to avoid such errors it has two additional distinct tRNA(Ile)-dependent editing activities. One activity is designated as 'pretransfer' editing and involves the hydrolysis of activated Val-AMP. The other activity is designated 'posttransfer' editing and involves deacylation of mischarged Val-tRNA(Ile).</text>
</comment>
<comment type="catalytic activity">
    <reaction evidence="1">
        <text>tRNA(Ile) + L-isoleucine + ATP = L-isoleucyl-tRNA(Ile) + AMP + diphosphate</text>
        <dbReference type="Rhea" id="RHEA:11060"/>
        <dbReference type="Rhea" id="RHEA-COMP:9666"/>
        <dbReference type="Rhea" id="RHEA-COMP:9695"/>
        <dbReference type="ChEBI" id="CHEBI:30616"/>
        <dbReference type="ChEBI" id="CHEBI:33019"/>
        <dbReference type="ChEBI" id="CHEBI:58045"/>
        <dbReference type="ChEBI" id="CHEBI:78442"/>
        <dbReference type="ChEBI" id="CHEBI:78528"/>
        <dbReference type="ChEBI" id="CHEBI:456215"/>
        <dbReference type="EC" id="6.1.1.5"/>
    </reaction>
</comment>
<comment type="cofactor">
    <cofactor evidence="1">
        <name>Zn(2+)</name>
        <dbReference type="ChEBI" id="CHEBI:29105"/>
    </cofactor>
    <text evidence="1">Binds 1 zinc ion per subunit.</text>
</comment>
<comment type="subunit">
    <text evidence="1">Monomer.</text>
</comment>
<comment type="subcellular location">
    <subcellularLocation>
        <location evidence="1">Cytoplasm</location>
    </subcellularLocation>
</comment>
<comment type="domain">
    <text evidence="1">IleRS has two distinct active sites: one for aminoacylation and one for editing. The misactivated valine is translocated from the active site to the editing site, which sterically excludes the correctly activated isoleucine. The single editing site contains two valyl binding pockets, one specific for each substrate (Val-AMP or Val-tRNA(Ile)).</text>
</comment>
<comment type="similarity">
    <text evidence="1">Belongs to the class-I aminoacyl-tRNA synthetase family. IleS type 1 subfamily.</text>
</comment>
<organism>
    <name type="scientific">Thermotoga maritima (strain ATCC 43589 / DSM 3109 / JCM 10099 / NBRC 100826 / MSB8)</name>
    <dbReference type="NCBI Taxonomy" id="243274"/>
    <lineage>
        <taxon>Bacteria</taxon>
        <taxon>Thermotogati</taxon>
        <taxon>Thermotogota</taxon>
        <taxon>Thermotogae</taxon>
        <taxon>Thermotogales</taxon>
        <taxon>Thermotogaceae</taxon>
        <taxon>Thermotoga</taxon>
    </lineage>
</organism>
<evidence type="ECO:0000255" key="1">
    <source>
        <dbReference type="HAMAP-Rule" id="MF_02002"/>
    </source>
</evidence>
<keyword id="KW-0030">Aminoacyl-tRNA synthetase</keyword>
<keyword id="KW-0067">ATP-binding</keyword>
<keyword id="KW-0963">Cytoplasm</keyword>
<keyword id="KW-0436">Ligase</keyword>
<keyword id="KW-0479">Metal-binding</keyword>
<keyword id="KW-0547">Nucleotide-binding</keyword>
<keyword id="KW-0648">Protein biosynthesis</keyword>
<keyword id="KW-1185">Reference proteome</keyword>
<keyword id="KW-0862">Zinc</keyword>
<reference key="1">
    <citation type="journal article" date="1999" name="Nature">
        <title>Evidence for lateral gene transfer between Archaea and Bacteria from genome sequence of Thermotoga maritima.</title>
        <authorList>
            <person name="Nelson K.E."/>
            <person name="Clayton R.A."/>
            <person name="Gill S.R."/>
            <person name="Gwinn M.L."/>
            <person name="Dodson R.J."/>
            <person name="Haft D.H."/>
            <person name="Hickey E.K."/>
            <person name="Peterson J.D."/>
            <person name="Nelson W.C."/>
            <person name="Ketchum K.A."/>
            <person name="McDonald L.A."/>
            <person name="Utterback T.R."/>
            <person name="Malek J.A."/>
            <person name="Linher K.D."/>
            <person name="Garrett M.M."/>
            <person name="Stewart A.M."/>
            <person name="Cotton M.D."/>
            <person name="Pratt M.S."/>
            <person name="Phillips C.A."/>
            <person name="Richardson D.L."/>
            <person name="Heidelberg J.F."/>
            <person name="Sutton G.G."/>
            <person name="Fleischmann R.D."/>
            <person name="Eisen J.A."/>
            <person name="White O."/>
            <person name="Salzberg S.L."/>
            <person name="Smith H.O."/>
            <person name="Venter J.C."/>
            <person name="Fraser C.M."/>
        </authorList>
    </citation>
    <scope>NUCLEOTIDE SEQUENCE [LARGE SCALE GENOMIC DNA]</scope>
    <source>
        <strain>ATCC 43589 / DSM 3109 / JCM 10099 / NBRC 100826 / MSB8</strain>
    </source>
</reference>
<reference key="2">
    <citation type="journal article" date="1995" name="Proc. Natl. Acad. Sci. U.S.A.">
        <title>Root of the universal tree of life based on ancient aminoacyl-tRNA synthetase gene duplications.</title>
        <authorList>
            <person name="Brown J.R."/>
            <person name="Doolittle W.F."/>
        </authorList>
    </citation>
    <scope>NUCLEOTIDE SEQUENCE [GENOMIC DNA] OF 95-599</scope>
</reference>
<dbReference type="EC" id="6.1.1.5" evidence="1"/>
<dbReference type="EMBL" id="AE000512">
    <property type="protein sequence ID" value="AAD36431.1"/>
    <property type="molecule type" value="Genomic_DNA"/>
</dbReference>
<dbReference type="EMBL" id="L37104">
    <property type="protein sequence ID" value="AAC41448.1"/>
    <property type="molecule type" value="Genomic_DNA"/>
</dbReference>
<dbReference type="PIR" id="B72263">
    <property type="entry name" value="B72263"/>
</dbReference>
<dbReference type="RefSeq" id="NP_229162.1">
    <property type="nucleotide sequence ID" value="NC_000853.1"/>
</dbReference>
<dbReference type="RefSeq" id="WP_004081557.1">
    <property type="nucleotide sequence ID" value="NC_000853.1"/>
</dbReference>
<dbReference type="SMR" id="P46213"/>
<dbReference type="FunCoup" id="P46213">
    <property type="interactions" value="368"/>
</dbReference>
<dbReference type="STRING" id="243274.TM_1361"/>
<dbReference type="PaxDb" id="243274-THEMA_07535"/>
<dbReference type="EnsemblBacteria" id="AAD36431">
    <property type="protein sequence ID" value="AAD36431"/>
    <property type="gene ID" value="TM_1361"/>
</dbReference>
<dbReference type="KEGG" id="tma:TM1361"/>
<dbReference type="KEGG" id="tmi:THEMA_07535"/>
<dbReference type="KEGG" id="tmm:Tmari_1368"/>
<dbReference type="KEGG" id="tmw:THMA_1386"/>
<dbReference type="eggNOG" id="COG0060">
    <property type="taxonomic scope" value="Bacteria"/>
</dbReference>
<dbReference type="InParanoid" id="P46213"/>
<dbReference type="OrthoDB" id="9810365at2"/>
<dbReference type="Proteomes" id="UP000008183">
    <property type="component" value="Chromosome"/>
</dbReference>
<dbReference type="GO" id="GO:0005829">
    <property type="term" value="C:cytosol"/>
    <property type="evidence" value="ECO:0000318"/>
    <property type="project" value="GO_Central"/>
</dbReference>
<dbReference type="GO" id="GO:0002161">
    <property type="term" value="F:aminoacyl-tRNA deacylase activity"/>
    <property type="evidence" value="ECO:0007669"/>
    <property type="project" value="InterPro"/>
</dbReference>
<dbReference type="GO" id="GO:0005524">
    <property type="term" value="F:ATP binding"/>
    <property type="evidence" value="ECO:0007669"/>
    <property type="project" value="UniProtKB-UniRule"/>
</dbReference>
<dbReference type="GO" id="GO:0004822">
    <property type="term" value="F:isoleucine-tRNA ligase activity"/>
    <property type="evidence" value="ECO:0000318"/>
    <property type="project" value="GO_Central"/>
</dbReference>
<dbReference type="GO" id="GO:0000049">
    <property type="term" value="F:tRNA binding"/>
    <property type="evidence" value="ECO:0007669"/>
    <property type="project" value="InterPro"/>
</dbReference>
<dbReference type="GO" id="GO:0008270">
    <property type="term" value="F:zinc ion binding"/>
    <property type="evidence" value="ECO:0007669"/>
    <property type="project" value="UniProtKB-UniRule"/>
</dbReference>
<dbReference type="GO" id="GO:0006428">
    <property type="term" value="P:isoleucyl-tRNA aminoacylation"/>
    <property type="evidence" value="ECO:0000318"/>
    <property type="project" value="GO_Central"/>
</dbReference>
<dbReference type="CDD" id="cd07960">
    <property type="entry name" value="Anticodon_Ia_Ile_BEm"/>
    <property type="match status" value="1"/>
</dbReference>
<dbReference type="CDD" id="cd00818">
    <property type="entry name" value="IleRS_core"/>
    <property type="match status" value="1"/>
</dbReference>
<dbReference type="FunFam" id="1.10.10.830:FF:000008">
    <property type="entry name" value="Isoleucine--tRNA ligase"/>
    <property type="match status" value="1"/>
</dbReference>
<dbReference type="FunFam" id="1.10.730.20:FF:000001">
    <property type="entry name" value="Isoleucine--tRNA ligase"/>
    <property type="match status" value="1"/>
</dbReference>
<dbReference type="FunFam" id="3.40.50.620:FF:000152">
    <property type="entry name" value="Isoleucine--tRNA ligase"/>
    <property type="match status" value="1"/>
</dbReference>
<dbReference type="Gene3D" id="1.10.730.20">
    <property type="match status" value="1"/>
</dbReference>
<dbReference type="Gene3D" id="3.40.50.620">
    <property type="entry name" value="HUPs"/>
    <property type="match status" value="2"/>
</dbReference>
<dbReference type="Gene3D" id="1.10.10.830">
    <property type="entry name" value="Ile-tRNA synthetase CP2 domain-like"/>
    <property type="match status" value="1"/>
</dbReference>
<dbReference type="HAMAP" id="MF_02002">
    <property type="entry name" value="Ile_tRNA_synth_type1"/>
    <property type="match status" value="1"/>
</dbReference>
<dbReference type="InterPro" id="IPR001412">
    <property type="entry name" value="aa-tRNA-synth_I_CS"/>
</dbReference>
<dbReference type="InterPro" id="IPR002300">
    <property type="entry name" value="aa-tRNA-synth_Ia"/>
</dbReference>
<dbReference type="InterPro" id="IPR033708">
    <property type="entry name" value="Anticodon_Ile_BEm"/>
</dbReference>
<dbReference type="InterPro" id="IPR002301">
    <property type="entry name" value="Ile-tRNA-ligase"/>
</dbReference>
<dbReference type="InterPro" id="IPR023585">
    <property type="entry name" value="Ile-tRNA-ligase_type1"/>
</dbReference>
<dbReference type="InterPro" id="IPR050081">
    <property type="entry name" value="Ile-tRNA_ligase"/>
</dbReference>
<dbReference type="InterPro" id="IPR013155">
    <property type="entry name" value="M/V/L/I-tRNA-synth_anticd-bd"/>
</dbReference>
<dbReference type="InterPro" id="IPR014729">
    <property type="entry name" value="Rossmann-like_a/b/a_fold"/>
</dbReference>
<dbReference type="InterPro" id="IPR009080">
    <property type="entry name" value="tRNAsynth_Ia_anticodon-bd"/>
</dbReference>
<dbReference type="InterPro" id="IPR009008">
    <property type="entry name" value="Val/Leu/Ile-tRNA-synth_edit"/>
</dbReference>
<dbReference type="InterPro" id="IPR010663">
    <property type="entry name" value="Znf_FPG/IleRS"/>
</dbReference>
<dbReference type="NCBIfam" id="TIGR00392">
    <property type="entry name" value="ileS"/>
    <property type="match status" value="1"/>
</dbReference>
<dbReference type="PANTHER" id="PTHR42765:SF1">
    <property type="entry name" value="ISOLEUCINE--TRNA LIGASE, MITOCHONDRIAL"/>
    <property type="match status" value="1"/>
</dbReference>
<dbReference type="PANTHER" id="PTHR42765">
    <property type="entry name" value="SOLEUCYL-TRNA SYNTHETASE"/>
    <property type="match status" value="1"/>
</dbReference>
<dbReference type="Pfam" id="PF08264">
    <property type="entry name" value="Anticodon_1"/>
    <property type="match status" value="1"/>
</dbReference>
<dbReference type="Pfam" id="PF00133">
    <property type="entry name" value="tRNA-synt_1"/>
    <property type="match status" value="1"/>
</dbReference>
<dbReference type="Pfam" id="PF06827">
    <property type="entry name" value="zf-FPG_IleRS"/>
    <property type="match status" value="1"/>
</dbReference>
<dbReference type="PRINTS" id="PR00984">
    <property type="entry name" value="TRNASYNTHILE"/>
</dbReference>
<dbReference type="SUPFAM" id="SSF47323">
    <property type="entry name" value="Anticodon-binding domain of a subclass of class I aminoacyl-tRNA synthetases"/>
    <property type="match status" value="1"/>
</dbReference>
<dbReference type="SUPFAM" id="SSF52374">
    <property type="entry name" value="Nucleotidylyl transferase"/>
    <property type="match status" value="1"/>
</dbReference>
<dbReference type="SUPFAM" id="SSF50677">
    <property type="entry name" value="ValRS/IleRS/LeuRS editing domain"/>
    <property type="match status" value="1"/>
</dbReference>
<dbReference type="PROSITE" id="PS00178">
    <property type="entry name" value="AA_TRNA_LIGASE_I"/>
    <property type="match status" value="1"/>
</dbReference>
<gene>
    <name evidence="1" type="primary">ileS</name>
    <name type="ordered locus">TM_1361</name>
</gene>
<sequence>MEYKNTLNLPKTSFPMKANLVNKEKVFLEEWEKMDLYNYVLEQRKGKPLFVLHDGPPYANGHIHIGTALNKILKDIVVKYKTMRGYRAPYVPGWDTHGLPIEHRVSQELGEKIKEMSPAEIRKKCEEFALRFVDIQREEFKRLGVRGDWENPYITLKPDYEVKILDVFKTLVEQGNVYRSLKPIYWCPRCRTALAEAEIEYHDHKSPSIYVKFRSKEDPNFFIVIWTTTPWTLPANVGIALHPDYEYSVVKVGEEKWVIATDLLDAFSKETGIDCSNVVEKIKGKDLEGKEFVHPIFDDRTSRVILADYVSLETGTGCVHIAPGHGEEDYIYGHVQYGLPIVSPVDEEGRFTEEAGKYKGMFIEDANEVIIEDLKRKGILVHASSITHSYPHCWRCKGPVIFRATEQWFISVDHNNLRQKVLEEIDKVKWIPEWGRNRIRSMVEERPDWCISRQRVWGTPIPAVKCKECGEVVLDPKVIEHFMKIVEKEGTNAWFEKEVEELIPEDFVCPKCGKRSFEKMLDTLDVWIDSGASFEYITTKREDHPFPLDMYLEGSDQHRGWFHSSIFLAVAKRGSAPYKEVLTHGFIKDEQGRKMSKSLGNVVDPMEVVEKYGAEILRLWLASSDYFNDIKISMRIVEQQTEVYRKIRNTFRFLLGNLEDFDPELDRVPHEKLLTIDRWALGRLQEIIKRATEYYDSYEFSKVYNLVVKYCTTELSSLYLDVVKDRLYVEAKDSIYRRSAQTVMHEILISLMKILAPIMTFTMEEVYSHLHEKDRKYKTVQAEYWPEYREEFIDRKLMEDFEKLLSIREDVLKALEEKRQQDVIGHSLDAEVVLVPKNDTIKALLEKYRDILEELFIVSKVSLSDASGELKGELVEVTVKHAEGEKCQRCWKYTTEISASEDFPGVCPRCLAVLKGERK</sequence>
<accession>P46213</accession>
<name>SYI_THEMA</name>